<keyword id="KW-0012">Acyltransferase</keyword>
<keyword id="KW-0028">Amino-acid biosynthesis</keyword>
<keyword id="KW-0055">Arginine biosynthesis</keyword>
<keyword id="KW-0963">Cytoplasm</keyword>
<keyword id="KW-1185">Reference proteome</keyword>
<keyword id="KW-0808">Transferase</keyword>
<proteinExistence type="inferred from homology"/>
<reference key="1">
    <citation type="journal article" date="2001" name="Nature">
        <title>Genome sequence of Yersinia pestis, the causative agent of plague.</title>
        <authorList>
            <person name="Parkhill J."/>
            <person name="Wren B.W."/>
            <person name="Thomson N.R."/>
            <person name="Titball R.W."/>
            <person name="Holden M.T.G."/>
            <person name="Prentice M.B."/>
            <person name="Sebaihia M."/>
            <person name="James K.D."/>
            <person name="Churcher C.M."/>
            <person name="Mungall K.L."/>
            <person name="Baker S."/>
            <person name="Basham D."/>
            <person name="Bentley S.D."/>
            <person name="Brooks K."/>
            <person name="Cerdeno-Tarraga A.-M."/>
            <person name="Chillingworth T."/>
            <person name="Cronin A."/>
            <person name="Davies R.M."/>
            <person name="Davis P."/>
            <person name="Dougan G."/>
            <person name="Feltwell T."/>
            <person name="Hamlin N."/>
            <person name="Holroyd S."/>
            <person name="Jagels K."/>
            <person name="Karlyshev A.V."/>
            <person name="Leather S."/>
            <person name="Moule S."/>
            <person name="Oyston P.C.F."/>
            <person name="Quail M.A."/>
            <person name="Rutherford K.M."/>
            <person name="Simmonds M."/>
            <person name="Skelton J."/>
            <person name="Stevens K."/>
            <person name="Whitehead S."/>
            <person name="Barrell B.G."/>
        </authorList>
    </citation>
    <scope>NUCLEOTIDE SEQUENCE [LARGE SCALE GENOMIC DNA]</scope>
    <source>
        <strain>CO-92 / Biovar Orientalis</strain>
    </source>
</reference>
<reference key="2">
    <citation type="journal article" date="2002" name="J. Bacteriol.">
        <title>Genome sequence of Yersinia pestis KIM.</title>
        <authorList>
            <person name="Deng W."/>
            <person name="Burland V."/>
            <person name="Plunkett G. III"/>
            <person name="Boutin A."/>
            <person name="Mayhew G.F."/>
            <person name="Liss P."/>
            <person name="Perna N.T."/>
            <person name="Rose D.J."/>
            <person name="Mau B."/>
            <person name="Zhou S."/>
            <person name="Schwartz D.C."/>
            <person name="Fetherston J.D."/>
            <person name="Lindler L.E."/>
            <person name="Brubaker R.R."/>
            <person name="Plano G.V."/>
            <person name="Straley S.C."/>
            <person name="McDonough K.A."/>
            <person name="Nilles M.L."/>
            <person name="Matson J.S."/>
            <person name="Blattner F.R."/>
            <person name="Perry R.D."/>
        </authorList>
    </citation>
    <scope>NUCLEOTIDE SEQUENCE [LARGE SCALE GENOMIC DNA]</scope>
    <source>
        <strain>KIM10+ / Biovar Mediaevalis</strain>
    </source>
</reference>
<reference key="3">
    <citation type="journal article" date="2004" name="DNA Res.">
        <title>Complete genome sequence of Yersinia pestis strain 91001, an isolate avirulent to humans.</title>
        <authorList>
            <person name="Song Y."/>
            <person name="Tong Z."/>
            <person name="Wang J."/>
            <person name="Wang L."/>
            <person name="Guo Z."/>
            <person name="Han Y."/>
            <person name="Zhang J."/>
            <person name="Pei D."/>
            <person name="Zhou D."/>
            <person name="Qin H."/>
            <person name="Pang X."/>
            <person name="Han Y."/>
            <person name="Zhai J."/>
            <person name="Li M."/>
            <person name="Cui B."/>
            <person name="Qi Z."/>
            <person name="Jin L."/>
            <person name="Dai R."/>
            <person name="Chen F."/>
            <person name="Li S."/>
            <person name="Ye C."/>
            <person name="Du Z."/>
            <person name="Lin W."/>
            <person name="Wang J."/>
            <person name="Yu J."/>
            <person name="Yang H."/>
            <person name="Wang J."/>
            <person name="Huang P."/>
            <person name="Yang R."/>
        </authorList>
    </citation>
    <scope>NUCLEOTIDE SEQUENCE [LARGE SCALE GENOMIC DNA]</scope>
    <source>
        <strain>91001 / Biovar Mediaevalis</strain>
    </source>
</reference>
<name>ARGA_YERPE</name>
<accession>Q8ZH86</accession>
<accession>Q0WI22</accession>
<comment type="catalytic activity">
    <reaction>
        <text>L-glutamate + acetyl-CoA = N-acetyl-L-glutamate + CoA + H(+)</text>
        <dbReference type="Rhea" id="RHEA:24292"/>
        <dbReference type="ChEBI" id="CHEBI:15378"/>
        <dbReference type="ChEBI" id="CHEBI:29985"/>
        <dbReference type="ChEBI" id="CHEBI:44337"/>
        <dbReference type="ChEBI" id="CHEBI:57287"/>
        <dbReference type="ChEBI" id="CHEBI:57288"/>
        <dbReference type="EC" id="2.3.1.1"/>
    </reaction>
</comment>
<comment type="pathway">
    <text>Amino-acid biosynthesis; L-arginine biosynthesis; N(2)-acetyl-L-ornithine from L-glutamate: step 1/4.</text>
</comment>
<comment type="subunit">
    <text evidence="1">Homohexamer.</text>
</comment>
<comment type="subcellular location">
    <subcellularLocation>
        <location evidence="1">Cytoplasm</location>
    </subcellularLocation>
</comment>
<comment type="similarity">
    <text evidence="2">Belongs to the acetyltransferase family. ArgA subfamily.</text>
</comment>
<dbReference type="EC" id="2.3.1.1"/>
<dbReference type="EMBL" id="AL590842">
    <property type="protein sequence ID" value="CAL19688.1"/>
    <property type="molecule type" value="Genomic_DNA"/>
</dbReference>
<dbReference type="EMBL" id="AE009952">
    <property type="protein sequence ID" value="AAM86712.1"/>
    <property type="molecule type" value="Genomic_DNA"/>
</dbReference>
<dbReference type="EMBL" id="AE017042">
    <property type="protein sequence ID" value="AAS63012.1"/>
    <property type="molecule type" value="Genomic_DNA"/>
</dbReference>
<dbReference type="PIR" id="AF0125">
    <property type="entry name" value="AF0125"/>
</dbReference>
<dbReference type="RefSeq" id="WP_002211624.1">
    <property type="nucleotide sequence ID" value="NZ_WUCM01000007.1"/>
</dbReference>
<dbReference type="RefSeq" id="YP_002346066.1">
    <property type="nucleotide sequence ID" value="NC_003143.1"/>
</dbReference>
<dbReference type="SMR" id="Q8ZH86"/>
<dbReference type="STRING" id="214092.YPO1022"/>
<dbReference type="PaxDb" id="214092-YPO1022"/>
<dbReference type="DNASU" id="1148109"/>
<dbReference type="EnsemblBacteria" id="AAS63012">
    <property type="protein sequence ID" value="AAS63012"/>
    <property type="gene ID" value="YP_2828"/>
</dbReference>
<dbReference type="GeneID" id="96662393"/>
<dbReference type="KEGG" id="ype:YPO1022"/>
<dbReference type="KEGG" id="ypk:y3162"/>
<dbReference type="KEGG" id="ypm:YP_2828"/>
<dbReference type="PATRIC" id="fig|214092.21.peg.1310"/>
<dbReference type="eggNOG" id="COG0548">
    <property type="taxonomic scope" value="Bacteria"/>
</dbReference>
<dbReference type="eggNOG" id="COG1246">
    <property type="taxonomic scope" value="Bacteria"/>
</dbReference>
<dbReference type="HOGENOM" id="CLU_024773_0_0_6"/>
<dbReference type="OMA" id="KRKYNWD"/>
<dbReference type="OrthoDB" id="9802238at2"/>
<dbReference type="UniPathway" id="UPA00068">
    <property type="reaction ID" value="UER00106"/>
</dbReference>
<dbReference type="Proteomes" id="UP000000815">
    <property type="component" value="Chromosome"/>
</dbReference>
<dbReference type="Proteomes" id="UP000001019">
    <property type="component" value="Chromosome"/>
</dbReference>
<dbReference type="Proteomes" id="UP000002490">
    <property type="component" value="Chromosome"/>
</dbReference>
<dbReference type="GO" id="GO:0005737">
    <property type="term" value="C:cytoplasm"/>
    <property type="evidence" value="ECO:0007669"/>
    <property type="project" value="UniProtKB-SubCell"/>
</dbReference>
<dbReference type="GO" id="GO:0004042">
    <property type="term" value="F:L-glutamate N-acetyltransferase activity"/>
    <property type="evidence" value="ECO:0007669"/>
    <property type="project" value="UniProtKB-UniRule"/>
</dbReference>
<dbReference type="GO" id="GO:0006526">
    <property type="term" value="P:L-arginine biosynthetic process"/>
    <property type="evidence" value="ECO:0007669"/>
    <property type="project" value="UniProtKB-UniRule"/>
</dbReference>
<dbReference type="CDD" id="cd04237">
    <property type="entry name" value="AAK_NAGS-ABP"/>
    <property type="match status" value="1"/>
</dbReference>
<dbReference type="CDD" id="cd04301">
    <property type="entry name" value="NAT_SF"/>
    <property type="match status" value="1"/>
</dbReference>
<dbReference type="FunFam" id="3.40.1160.10:FF:000005">
    <property type="entry name" value="Amino-acid acetyltransferase"/>
    <property type="match status" value="1"/>
</dbReference>
<dbReference type="FunFam" id="3.40.630.30:FF:000009">
    <property type="entry name" value="Amino-acid acetyltransferase"/>
    <property type="match status" value="1"/>
</dbReference>
<dbReference type="Gene3D" id="3.40.630.30">
    <property type="match status" value="1"/>
</dbReference>
<dbReference type="Gene3D" id="3.40.1160.10">
    <property type="entry name" value="Acetylglutamate kinase-like"/>
    <property type="match status" value="1"/>
</dbReference>
<dbReference type="HAMAP" id="MF_01105">
    <property type="entry name" value="N_acetyl_glu_synth"/>
    <property type="match status" value="1"/>
</dbReference>
<dbReference type="InterPro" id="IPR036393">
    <property type="entry name" value="AceGlu_kinase-like_sf"/>
</dbReference>
<dbReference type="InterPro" id="IPR016181">
    <property type="entry name" value="Acyl_CoA_acyltransferase"/>
</dbReference>
<dbReference type="InterPro" id="IPR001048">
    <property type="entry name" value="Asp/Glu/Uridylate_kinase"/>
</dbReference>
<dbReference type="InterPro" id="IPR000182">
    <property type="entry name" value="GNAT_dom"/>
</dbReference>
<dbReference type="InterPro" id="IPR033719">
    <property type="entry name" value="NAGS_kin"/>
</dbReference>
<dbReference type="InterPro" id="IPR010167">
    <property type="entry name" value="NH2A_AcTrfase"/>
</dbReference>
<dbReference type="NCBIfam" id="TIGR01890">
    <property type="entry name" value="N-Ac-Glu-synth"/>
    <property type="match status" value="1"/>
</dbReference>
<dbReference type="NCBIfam" id="NF003641">
    <property type="entry name" value="PRK05279.1"/>
    <property type="match status" value="1"/>
</dbReference>
<dbReference type="PANTHER" id="PTHR30602">
    <property type="entry name" value="AMINO-ACID ACETYLTRANSFERASE"/>
    <property type="match status" value="1"/>
</dbReference>
<dbReference type="PANTHER" id="PTHR30602:SF12">
    <property type="entry name" value="AMINO-ACID ACETYLTRANSFERASE NAGS1, CHLOROPLASTIC-RELATED"/>
    <property type="match status" value="1"/>
</dbReference>
<dbReference type="Pfam" id="PF00696">
    <property type="entry name" value="AA_kinase"/>
    <property type="match status" value="1"/>
</dbReference>
<dbReference type="Pfam" id="PF00583">
    <property type="entry name" value="Acetyltransf_1"/>
    <property type="match status" value="1"/>
</dbReference>
<dbReference type="PIRSF" id="PIRSF000423">
    <property type="entry name" value="ArgA"/>
    <property type="match status" value="1"/>
</dbReference>
<dbReference type="SUPFAM" id="SSF55729">
    <property type="entry name" value="Acyl-CoA N-acyltransferases (Nat)"/>
    <property type="match status" value="1"/>
</dbReference>
<dbReference type="SUPFAM" id="SSF53633">
    <property type="entry name" value="Carbamate kinase-like"/>
    <property type="match status" value="1"/>
</dbReference>
<dbReference type="PROSITE" id="PS51186">
    <property type="entry name" value="GNAT"/>
    <property type="match status" value="1"/>
</dbReference>
<protein>
    <recommendedName>
        <fullName>Amino-acid acetyltransferase</fullName>
        <ecNumber>2.3.1.1</ecNumber>
    </recommendedName>
    <alternativeName>
        <fullName>N-acetylglutamate synthase</fullName>
        <shortName>AGS</shortName>
        <shortName>NAGS</shortName>
    </alternativeName>
</protein>
<evidence type="ECO:0000250" key="1"/>
<evidence type="ECO:0000305" key="2"/>
<feature type="chain" id="PRO_0000186812" description="Amino-acid acetyltransferase">
    <location>
        <begin position="1"/>
        <end position="441"/>
    </location>
</feature>
<feature type="domain" description="N-acetyltransferase">
    <location>
        <begin position="295"/>
        <end position="434"/>
    </location>
</feature>
<feature type="sequence conflict" description="In Ref. 3; AAS63012." evidence="2" ref="3">
    <original>QRRSKILLADL</original>
    <variation>CNERCNSDPHPTPEIRSRG</variation>
    <location>
        <begin position="431"/>
        <end position="441"/>
    </location>
</feature>
<gene>
    <name type="primary">argA</name>
    <name type="ordered locus">YPO1022</name>
    <name type="ordered locus">y3162</name>
    <name type="ordered locus">YP_2828</name>
</gene>
<organism>
    <name type="scientific">Yersinia pestis</name>
    <dbReference type="NCBI Taxonomy" id="632"/>
    <lineage>
        <taxon>Bacteria</taxon>
        <taxon>Pseudomonadati</taxon>
        <taxon>Pseudomonadota</taxon>
        <taxon>Gammaproteobacteria</taxon>
        <taxon>Enterobacterales</taxon>
        <taxon>Yersiniaceae</taxon>
        <taxon>Yersinia</taxon>
    </lineage>
</organism>
<sequence length="441" mass="49355">MKERSTELVQGFRHSVPYINAHRGKTFVVMLGGEAIEHENFSSIVNDIGLLHSLGIRLVVVYGARPQIDSNLADHNYEPIYHKHTRVTDARTLEMVKQAAGLLQLDITARLSMSLNNTPLQGAHINVVSGNFIIAQPLGVDDGVDYCHSGRIRRIDEEAIHRQLDNGAIVLLGPVAVSVTGESFNLTSEEVATQLAIKLKAEKMIGFCSSQGVTDSEGNIISELFPNDAQKRIEDLEQDGDYNSGTVRFLRGAVKACRSGVRRSHLLSYQEDGALIQELFSRDGIGTQIVMESAEQVRRATINDIGGILELIRPLEQQGILVRRSREQLEMEIDKFTIIERDNLTIACAALYPFPDEHIGEMACVAVHPDYRSSSRGEMLLNRITNQARQMGLKKLFVLTTRSIHWFQERGFTPAEVDVLPIQKQELYNYQRRSKILLADL</sequence>